<gene>
    <name evidence="5" type="ordered locus">STK_22380</name>
</gene>
<reference key="1">
    <citation type="journal article" date="2001" name="DNA Res.">
        <title>Complete genome sequence of an aerobic thermoacidophilic Crenarchaeon, Sulfolobus tokodaii strain7.</title>
        <authorList>
            <person name="Kawarabayasi Y."/>
            <person name="Hino Y."/>
            <person name="Horikawa H."/>
            <person name="Jin-no K."/>
            <person name="Takahashi M."/>
            <person name="Sekine M."/>
            <person name="Baba S."/>
            <person name="Ankai A."/>
            <person name="Kosugi H."/>
            <person name="Hosoyama A."/>
            <person name="Fukui S."/>
            <person name="Nagai Y."/>
            <person name="Nishijima K."/>
            <person name="Otsuka R."/>
            <person name="Nakazawa H."/>
            <person name="Takamiya M."/>
            <person name="Kato Y."/>
            <person name="Yoshizawa T."/>
            <person name="Tanaka T."/>
            <person name="Kudoh Y."/>
            <person name="Yamazaki J."/>
            <person name="Kushida N."/>
            <person name="Oguchi A."/>
            <person name="Aoki K."/>
            <person name="Masuda S."/>
            <person name="Yanagii M."/>
            <person name="Nishimura M."/>
            <person name="Yamagishi A."/>
            <person name="Oshima T."/>
            <person name="Kikuchi H."/>
        </authorList>
    </citation>
    <scope>NUCLEOTIDE SEQUENCE [LARGE SCALE GENOMIC DNA]</scope>
    <source>
        <strain>DSM 16993 / JCM 10545 / NBRC 100140 / 7</strain>
    </source>
</reference>
<reference key="2">
    <citation type="journal article" date="2012" name="Acta Crystallogr. F">
        <title>Purification, crystallization and preliminary X-ray analysis of uracil-DNA glycosylase from Sulfolobus tokodaii strain 7.</title>
        <authorList>
            <person name="Kawai A."/>
            <person name="Higuchi S."/>
            <person name="Tsunoda M."/>
            <person name="Nakamura K.T."/>
            <person name="Miyamoto S."/>
        </authorList>
    </citation>
    <scope>CRYSTALLIZATION</scope>
</reference>
<reference evidence="6 7 8" key="3">
    <citation type="journal article" date="2015" name="FEBS Lett.">
        <title>Crystal structure of family 4 uracil-DNA glycosylase from Sulfolobus tokodaii and a function of tyrosine 170 in DNA binding.</title>
        <authorList>
            <person name="Kawai A."/>
            <person name="Higuchi S."/>
            <person name="Tsunoda M."/>
            <person name="Nakamura K.T."/>
            <person name="Yamagata Y."/>
            <person name="Miyamoto S."/>
        </authorList>
    </citation>
    <scope>X-RAY CRYSTALLOGRAPHY (1.70 ANGSTROMS) OF 1-194 IN COMPLEX WITH IRON-SULFUR (4FE-4S) AND URACIL</scope>
    <scope>FUNCTION</scope>
    <scope>CATALYTIC ACTIVITY</scope>
    <scope>MUTAGENESIS OF LEU-169; TYR-170 AND ASN-171</scope>
</reference>
<name>UDGA_SULTO</name>
<accession>Q96YD0</accession>
<proteinExistence type="evidence at protein level"/>
<feature type="chain" id="PRO_0000439186" description="Type-4 uracil-DNA glycosylase">
    <location>
        <begin position="1"/>
        <end position="220"/>
    </location>
</feature>
<feature type="binding site" evidence="2 6 7 8">
    <location>
        <position position="14"/>
    </location>
    <ligand>
        <name>[4Fe-4S] cluster</name>
        <dbReference type="ChEBI" id="CHEBI:49883"/>
    </ligand>
</feature>
<feature type="binding site" evidence="2 6 7 8">
    <location>
        <position position="17"/>
    </location>
    <ligand>
        <name>[4Fe-4S] cluster</name>
        <dbReference type="ChEBI" id="CHEBI:49883"/>
    </ligand>
</feature>
<feature type="binding site" evidence="2">
    <location>
        <begin position="41"/>
        <end position="43"/>
    </location>
    <ligand>
        <name>uracil</name>
        <dbReference type="ChEBI" id="CHEBI:17568"/>
    </ligand>
</feature>
<feature type="binding site" evidence="2">
    <location>
        <position position="55"/>
    </location>
    <ligand>
        <name>uracil</name>
        <dbReference type="ChEBI" id="CHEBI:17568"/>
    </ligand>
</feature>
<feature type="binding site" evidence="2">
    <location>
        <position position="82"/>
    </location>
    <ligand>
        <name>uracil</name>
        <dbReference type="ChEBI" id="CHEBI:17568"/>
    </ligand>
</feature>
<feature type="binding site" evidence="2 6 7 8">
    <location>
        <position position="86"/>
    </location>
    <ligand>
        <name>[4Fe-4S] cluster</name>
        <dbReference type="ChEBI" id="CHEBI:49883"/>
    </ligand>
</feature>
<feature type="binding site" evidence="2 6 7 8">
    <location>
        <position position="102"/>
    </location>
    <ligand>
        <name>[4Fe-4S] cluster</name>
        <dbReference type="ChEBI" id="CHEBI:49883"/>
    </ligand>
</feature>
<feature type="binding site" evidence="1">
    <location>
        <position position="164"/>
    </location>
    <ligand>
        <name>uracil</name>
        <dbReference type="ChEBI" id="CHEBI:17568"/>
    </ligand>
</feature>
<feature type="mutagenesis site" description="No change in activity." evidence="2">
    <original>L</original>
    <variation>A</variation>
    <location>
        <position position="169"/>
    </location>
</feature>
<feature type="mutagenesis site" description="Lack of activity." evidence="2">
    <original>Y</original>
    <variation>A</variation>
    <location>
        <position position="170"/>
    </location>
</feature>
<feature type="mutagenesis site" description="No change in activity." evidence="2">
    <original>N</original>
    <variation>A</variation>
    <location>
        <position position="171"/>
    </location>
</feature>
<feature type="helix" evidence="9">
    <location>
        <begin position="4"/>
        <end position="12"/>
    </location>
</feature>
<feature type="helix" evidence="9">
    <location>
        <begin position="18"/>
        <end position="22"/>
    </location>
</feature>
<feature type="strand" evidence="9">
    <location>
        <begin position="36"/>
        <end position="43"/>
    </location>
</feature>
<feature type="helix" evidence="9">
    <location>
        <begin position="46"/>
        <end position="51"/>
    </location>
</feature>
<feature type="strand" evidence="9">
    <location>
        <begin position="53"/>
        <end position="55"/>
    </location>
</feature>
<feature type="helix" evidence="9">
    <location>
        <begin position="58"/>
        <end position="69"/>
    </location>
</feature>
<feature type="helix" evidence="9">
    <location>
        <begin position="75"/>
        <end position="77"/>
    </location>
</feature>
<feature type="strand" evidence="9">
    <location>
        <begin position="78"/>
        <end position="84"/>
    </location>
</feature>
<feature type="helix" evidence="9">
    <location>
        <begin position="89"/>
        <end position="91"/>
    </location>
</feature>
<feature type="helix" evidence="9">
    <location>
        <begin position="96"/>
        <end position="113"/>
    </location>
</feature>
<feature type="strand" evidence="9">
    <location>
        <begin position="116"/>
        <end position="122"/>
    </location>
</feature>
<feature type="helix" evidence="9">
    <location>
        <begin position="123"/>
        <end position="133"/>
    </location>
</feature>
<feature type="helix" evidence="9">
    <location>
        <begin position="140"/>
        <end position="143"/>
    </location>
</feature>
<feature type="strand" evidence="9">
    <location>
        <begin position="148"/>
        <end position="152"/>
    </location>
</feature>
<feature type="strand" evidence="9">
    <location>
        <begin position="155"/>
        <end position="162"/>
    </location>
</feature>
<feature type="helix" evidence="9">
    <location>
        <begin position="165"/>
        <end position="168"/>
    </location>
</feature>
<feature type="helix" evidence="9">
    <location>
        <begin position="172"/>
        <end position="190"/>
    </location>
</feature>
<sequence length="220" mass="25359">MDSLEKIKEEVISCKKCKLWQFRTNAVPGEGYPKAEIMFVGEAPGENEDKEGRPFVGAAGKLLTQMIKEILGLERDQVFITNVVKCRPPNNRDPEEDEITACSPYLDRQIDIIMPKIIVTLGRHSTKYIFSKMGENFSSITKVRGKSYVWKYKEKEIIVFPTYHPAAALYNPNLRKILEEDFKKIRELAITPKRYTIDYFLGGKNRSWDKREKSDSNSGK</sequence>
<dbReference type="EC" id="3.2.2.27" evidence="2"/>
<dbReference type="EMBL" id="BA000023">
    <property type="protein sequence ID" value="BAB67347.1"/>
    <property type="molecule type" value="Genomic_DNA"/>
</dbReference>
<dbReference type="RefSeq" id="WP_010980322.1">
    <property type="nucleotide sequence ID" value="NC_003106.2"/>
</dbReference>
<dbReference type="PDB" id="4ZBX">
    <property type="method" value="X-ray"/>
    <property type="resolution" value="1.70 A"/>
    <property type="chains" value="A=1-194"/>
</dbReference>
<dbReference type="PDB" id="4ZBY">
    <property type="method" value="X-ray"/>
    <property type="resolution" value="1.70 A"/>
    <property type="chains" value="A=1-194"/>
</dbReference>
<dbReference type="PDB" id="4ZBZ">
    <property type="method" value="X-ray"/>
    <property type="resolution" value="1.90 A"/>
    <property type="chains" value="A=1-194"/>
</dbReference>
<dbReference type="PDBsum" id="4ZBX"/>
<dbReference type="PDBsum" id="4ZBY"/>
<dbReference type="PDBsum" id="4ZBZ"/>
<dbReference type="SMR" id="Q96YD0"/>
<dbReference type="STRING" id="273063.STK_22380"/>
<dbReference type="GeneID" id="1460319"/>
<dbReference type="KEGG" id="sto:STK_22380"/>
<dbReference type="PATRIC" id="fig|273063.9.peg.2538"/>
<dbReference type="eggNOG" id="arCOG00905">
    <property type="taxonomic scope" value="Archaea"/>
</dbReference>
<dbReference type="OrthoDB" id="8612at2157"/>
<dbReference type="BRENDA" id="3.2.2.27">
    <property type="organism ID" value="15396"/>
</dbReference>
<dbReference type="EvolutionaryTrace" id="Q96YD0"/>
<dbReference type="Proteomes" id="UP000001015">
    <property type="component" value="Chromosome"/>
</dbReference>
<dbReference type="GO" id="GO:0051539">
    <property type="term" value="F:4 iron, 4 sulfur cluster binding"/>
    <property type="evidence" value="ECO:0000314"/>
    <property type="project" value="UniProtKB"/>
</dbReference>
<dbReference type="GO" id="GO:0046872">
    <property type="term" value="F:metal ion binding"/>
    <property type="evidence" value="ECO:0007669"/>
    <property type="project" value="UniProtKB-KW"/>
</dbReference>
<dbReference type="GO" id="GO:0004844">
    <property type="term" value="F:uracil DNA N-glycosylase activity"/>
    <property type="evidence" value="ECO:0000314"/>
    <property type="project" value="UniProtKB"/>
</dbReference>
<dbReference type="GO" id="GO:0006281">
    <property type="term" value="P:DNA repair"/>
    <property type="evidence" value="ECO:0000314"/>
    <property type="project" value="UniProtKB"/>
</dbReference>
<dbReference type="CDD" id="cd10030">
    <property type="entry name" value="UDG-F4_TTUDGA_SPO1dp_like"/>
    <property type="match status" value="1"/>
</dbReference>
<dbReference type="FunFam" id="3.40.470.10:FF:000013">
    <property type="entry name" value="Type-4 uracil-DNA glycosylase"/>
    <property type="match status" value="1"/>
</dbReference>
<dbReference type="Gene3D" id="3.40.470.10">
    <property type="entry name" value="Uracil-DNA glycosylase-like domain"/>
    <property type="match status" value="1"/>
</dbReference>
<dbReference type="InterPro" id="IPR053423">
    <property type="entry name" value="Type-4_UDG"/>
</dbReference>
<dbReference type="InterPro" id="IPR051536">
    <property type="entry name" value="UDG_Type-4/5"/>
</dbReference>
<dbReference type="InterPro" id="IPR005273">
    <property type="entry name" value="Ura-DNA_glyco_family4"/>
</dbReference>
<dbReference type="InterPro" id="IPR005122">
    <property type="entry name" value="Uracil-DNA_glycosylase-like"/>
</dbReference>
<dbReference type="InterPro" id="IPR036895">
    <property type="entry name" value="Uracil-DNA_glycosylase-like_sf"/>
</dbReference>
<dbReference type="NCBIfam" id="NF040953">
    <property type="entry name" value="Arch_udg"/>
    <property type="match status" value="1"/>
</dbReference>
<dbReference type="NCBIfam" id="TIGR00758">
    <property type="entry name" value="UDG_fam4"/>
    <property type="match status" value="1"/>
</dbReference>
<dbReference type="PANTHER" id="PTHR33693:SF1">
    <property type="entry name" value="TYPE-4 URACIL-DNA GLYCOSYLASE"/>
    <property type="match status" value="1"/>
</dbReference>
<dbReference type="PANTHER" id="PTHR33693">
    <property type="entry name" value="TYPE-5 URACIL-DNA GLYCOSYLASE"/>
    <property type="match status" value="1"/>
</dbReference>
<dbReference type="Pfam" id="PF03167">
    <property type="entry name" value="UDG"/>
    <property type="match status" value="1"/>
</dbReference>
<dbReference type="SMART" id="SM00986">
    <property type="entry name" value="UDG"/>
    <property type="match status" value="1"/>
</dbReference>
<dbReference type="SMART" id="SM00987">
    <property type="entry name" value="UreE_C"/>
    <property type="match status" value="1"/>
</dbReference>
<dbReference type="SUPFAM" id="SSF52141">
    <property type="entry name" value="Uracil-DNA glycosylase-like"/>
    <property type="match status" value="1"/>
</dbReference>
<protein>
    <recommendedName>
        <fullName evidence="4">Type-4 uracil-DNA glycosylase</fullName>
        <ecNumber evidence="2">3.2.2.27</ecNumber>
    </recommendedName>
    <alternativeName>
        <fullName evidence="3">stoUDG</fullName>
    </alternativeName>
</protein>
<comment type="function">
    <text evidence="2">Removes uracil bases that are present in DNA as a result of either deamination of cytosine or misincorporation of dUMP instead of dTMP.</text>
</comment>
<comment type="catalytic activity">
    <reaction evidence="2">
        <text>Hydrolyzes single-stranded DNA or mismatched double-stranded DNA and polynucleotides, releasing free uracil.</text>
        <dbReference type="EC" id="3.2.2.27"/>
    </reaction>
</comment>
<comment type="similarity">
    <text evidence="4">Belongs to the uracil-DNA glycosylase (UDG) superfamily. Type 4 (UDGa) family.</text>
</comment>
<evidence type="ECO:0000250" key="1">
    <source>
        <dbReference type="UniProtKB" id="Q5SKC5"/>
    </source>
</evidence>
<evidence type="ECO:0000269" key="2">
    <source>
    </source>
</evidence>
<evidence type="ECO:0000303" key="3">
    <source>
    </source>
</evidence>
<evidence type="ECO:0000305" key="4"/>
<evidence type="ECO:0000312" key="5">
    <source>
        <dbReference type="EMBL" id="BAB67347.1"/>
    </source>
</evidence>
<evidence type="ECO:0007744" key="6">
    <source>
        <dbReference type="PDB" id="4ZBX"/>
    </source>
</evidence>
<evidence type="ECO:0007744" key="7">
    <source>
        <dbReference type="PDB" id="4ZBY"/>
    </source>
</evidence>
<evidence type="ECO:0007744" key="8">
    <source>
        <dbReference type="PDB" id="4ZBZ"/>
    </source>
</evidence>
<evidence type="ECO:0007829" key="9">
    <source>
        <dbReference type="PDB" id="4ZBX"/>
    </source>
</evidence>
<keyword id="KW-0002">3D-structure</keyword>
<keyword id="KW-0004">4Fe-4S</keyword>
<keyword id="KW-0227">DNA damage</keyword>
<keyword id="KW-0234">DNA repair</keyword>
<keyword id="KW-0378">Hydrolase</keyword>
<keyword id="KW-0408">Iron</keyword>
<keyword id="KW-0411">Iron-sulfur</keyword>
<keyword id="KW-0479">Metal-binding</keyword>
<keyword id="KW-1185">Reference proteome</keyword>
<organism>
    <name type="scientific">Sulfurisphaera tokodaii (strain DSM 16993 / JCM 10545 / NBRC 100140 / 7)</name>
    <name type="common">Sulfolobus tokodaii</name>
    <dbReference type="NCBI Taxonomy" id="273063"/>
    <lineage>
        <taxon>Archaea</taxon>
        <taxon>Thermoproteota</taxon>
        <taxon>Thermoprotei</taxon>
        <taxon>Sulfolobales</taxon>
        <taxon>Sulfolobaceae</taxon>
        <taxon>Sulfurisphaera</taxon>
    </lineage>
</organism>